<gene>
    <name type="primary">UL84</name>
</gene>
<reference key="1">
    <citation type="journal article" date="2004" name="J. Gen. Virol.">
        <title>Genetic content of wild-type human cytomegalovirus.</title>
        <authorList>
            <person name="Dolan A."/>
            <person name="Cunningham C."/>
            <person name="Hector R.D."/>
            <person name="Hassan-Walker A.F."/>
            <person name="Lee L."/>
            <person name="Addison C."/>
            <person name="Dargan D.J."/>
            <person name="McGeoch D.J."/>
            <person name="Gatherer D."/>
            <person name="Emery V.C."/>
            <person name="Griffiths P.D."/>
            <person name="Sinzger C."/>
            <person name="McSharry B.P."/>
            <person name="Wilkinson G.W.G."/>
            <person name="Davison A.J."/>
        </authorList>
    </citation>
    <scope>NUCLEOTIDE SEQUENCE [LARGE SCALE GENOMIC DNA]</scope>
</reference>
<organism>
    <name type="scientific">Human cytomegalovirus (strain Merlin)</name>
    <name type="common">HHV-5</name>
    <name type="synonym">Human herpesvirus 5</name>
    <dbReference type="NCBI Taxonomy" id="295027"/>
    <lineage>
        <taxon>Viruses</taxon>
        <taxon>Duplodnaviria</taxon>
        <taxon>Heunggongvirae</taxon>
        <taxon>Peploviricota</taxon>
        <taxon>Herviviricetes</taxon>
        <taxon>Herpesvirales</taxon>
        <taxon>Orthoherpesviridae</taxon>
        <taxon>Betaherpesvirinae</taxon>
        <taxon>Cytomegalovirus</taxon>
        <taxon>Cytomegalovirus humanbeta5</taxon>
        <taxon>Human cytomegalovirus</taxon>
    </lineage>
</organism>
<dbReference type="EMBL" id="AY446894">
    <property type="protein sequence ID" value="AAR31636.1"/>
    <property type="molecule type" value="Genomic_DNA"/>
</dbReference>
<dbReference type="RefSeq" id="YP_081532.1">
    <property type="nucleotide sequence ID" value="NC_006273.2"/>
</dbReference>
<dbReference type="BioGRID" id="1678078">
    <property type="interactions" value="2"/>
</dbReference>
<dbReference type="GeneID" id="3077525"/>
<dbReference type="KEGG" id="vg:3077525"/>
<dbReference type="Reactome" id="R-HSA-9609690">
    <property type="pathway name" value="HCMV Early Events"/>
</dbReference>
<dbReference type="Reactome" id="R-HSA-9610379">
    <property type="pathway name" value="HCMV Late Events"/>
</dbReference>
<dbReference type="Proteomes" id="UP000000938">
    <property type="component" value="Segment"/>
</dbReference>
<dbReference type="GO" id="GO:0030430">
    <property type="term" value="C:host cell cytoplasm"/>
    <property type="evidence" value="ECO:0007669"/>
    <property type="project" value="UniProtKB-SubCell"/>
</dbReference>
<dbReference type="GO" id="GO:0042025">
    <property type="term" value="C:host cell nucleus"/>
    <property type="evidence" value="ECO:0007669"/>
    <property type="project" value="UniProtKB-SubCell"/>
</dbReference>
<dbReference type="GO" id="GO:0019033">
    <property type="term" value="C:viral tegument"/>
    <property type="evidence" value="ECO:0000304"/>
    <property type="project" value="Reactome"/>
</dbReference>
<dbReference type="InterPro" id="IPR010436">
    <property type="entry name" value="Herpes_UL84"/>
</dbReference>
<dbReference type="Pfam" id="PF06284">
    <property type="entry name" value="Cytomega_UL84"/>
    <property type="match status" value="1"/>
</dbReference>
<protein>
    <recommendedName>
        <fullName>Protein UL84</fullName>
    </recommendedName>
</protein>
<evidence type="ECO:0000250" key="1"/>
<evidence type="ECO:0000256" key="2">
    <source>
        <dbReference type="SAM" id="MobiDB-lite"/>
    </source>
</evidence>
<evidence type="ECO:0000305" key="3"/>
<name>UL84_HCMVM</name>
<organismHost>
    <name type="scientific">Homo sapiens</name>
    <name type="common">Human</name>
    <dbReference type="NCBI Taxonomy" id="9606"/>
</organismHost>
<sequence>MPRVDPNLRNRARRPRARRGGGGGVGSNSSRHSGKCRRQRRALSTPPLTFLATTTTTTMMGVASTDDDSLLLKTPDELDKHSGSPQTILTLTDKHDIRQPRVHRGTYHLIQLHLDLRPEELRDPFQILLSTPLQLGEANGESQTAPATSQEEETAASHEPEKKKEKEEKKEEEDEDDRNDDRERGILCVVSNEDSDVRPAFSLFPARPGCHILRSVIDQQLTRMAIVRLSLNLFALRIITPLLKRLPLRRKAAHHTALHDCLALHLPELTFEPTLDINNVTENAASVADTAESTDADLTPTLTVRVRHALCWHRVEGGISGPRGLTSRISARLSETTAKTLGPSVFGRLELDPNESPPDLTLSSLTLYQDGILRFNVTCDRTEAPADPVAFRLRLRRETVRRPFFSDAPLPYFVPPRSGAADEGLEVRVPYELTLKNSHTLRIYRRFYGPYLGVFVPHNRQGLKMPVTVWLPRSWLELTVLVSDENGATFPRDALLGRLYFISSKHTLNRGCLSAMTHQVKSTLHSRSTSHSPSQQQLSVLGASIALEDLLPMRLASPETEPQDCKLTENTTEKTSPVTLAMVCGDL</sequence>
<accession>F5HB40</accession>
<proteinExistence type="inferred from homology"/>
<keyword id="KW-1035">Host cytoplasm</keyword>
<keyword id="KW-1048">Host nucleus</keyword>
<keyword id="KW-1185">Reference proteome</keyword>
<feature type="chain" id="PRO_0000417848" description="Protein UL84">
    <location>
        <begin position="1"/>
        <end position="587"/>
    </location>
</feature>
<feature type="region of interest" description="Disordered" evidence="2">
    <location>
        <begin position="1"/>
        <end position="48"/>
    </location>
</feature>
<feature type="region of interest" description="Disordered" evidence="2">
    <location>
        <begin position="136"/>
        <end position="185"/>
    </location>
</feature>
<feature type="short sequence motif" description="Nuclear localization signal" evidence="1">
    <location>
        <begin position="161"/>
        <end position="170"/>
    </location>
</feature>
<feature type="short sequence motif" description="Nuclear export signal 1 (NES 1)" evidence="1">
    <location>
        <begin position="229"/>
        <end position="238"/>
    </location>
</feature>
<feature type="short sequence motif" description="Nuclear export signal 2 (NES 2)" evidence="1">
    <location>
        <begin position="360"/>
        <end position="367"/>
    </location>
</feature>
<feature type="compositionally biased region" description="Basic residues" evidence="2">
    <location>
        <begin position="10"/>
        <end position="19"/>
    </location>
</feature>
<feature type="compositionally biased region" description="Basic residues" evidence="2">
    <location>
        <begin position="32"/>
        <end position="41"/>
    </location>
</feature>
<feature type="compositionally biased region" description="Polar residues" evidence="2">
    <location>
        <begin position="140"/>
        <end position="149"/>
    </location>
</feature>
<feature type="compositionally biased region" description="Basic and acidic residues" evidence="2">
    <location>
        <begin position="155"/>
        <end position="169"/>
    </location>
</feature>
<comment type="function">
    <text evidence="1">Plays an essential role in viral DNA replication. May participate in the DNA replication initiation by interacting with the origin of lytic replication, oriLyt and subsequently recruiting other viral/cellular factors. Additionally, interacts with and shuttles IRS1 viral mRNA from the host nucleus to the cytoplasm (By similarity).</text>
</comment>
<comment type="subunit">
    <text evidence="1">Interacts with the DNA polymerase accessory subunit UL44. Interacts with HCMV major transcription-activating enzyme IE2. Interacts with host HNRNPK (By similarity).</text>
</comment>
<comment type="subcellular location">
    <subcellularLocation>
        <location evidence="1">Host nucleus</location>
    </subcellularLocation>
    <subcellularLocation>
        <location evidence="1">Host cytoplasm</location>
    </subcellularLocation>
    <text evidence="1">Shuttles between host nucleus and cytoplasm. In the nucleus, colocalizes with UL44 and IE2 in the viral DNA replication compartments (By similarity).</text>
</comment>
<comment type="similarity">
    <text evidence="3">Belongs to the HHV-5 UL84 protein family.</text>
</comment>